<gene>
    <name evidence="1" type="primary">leuS</name>
    <name type="ordered locus">BF4372</name>
</gene>
<name>SYL_BACFN</name>
<keyword id="KW-0030">Aminoacyl-tRNA synthetase</keyword>
<keyword id="KW-0067">ATP-binding</keyword>
<keyword id="KW-0963">Cytoplasm</keyword>
<keyword id="KW-0436">Ligase</keyword>
<keyword id="KW-0547">Nucleotide-binding</keyword>
<keyword id="KW-0648">Protein biosynthesis</keyword>
<proteinExistence type="inferred from homology"/>
<evidence type="ECO:0000255" key="1">
    <source>
        <dbReference type="HAMAP-Rule" id="MF_00049"/>
    </source>
</evidence>
<accession>Q5L7B4</accession>
<sequence>MEYNFREIEKKWQKIWVDNHTYQVNEDASKQKFYVLNMFPYPSGAGLHVGHPLGYIASDIYARYKRLQGFNVLNPMGYDAYGLPAEQYAIQTGQHPAITTVNNINRYREQLDKIGFSFDWNREIRTCDPEYYHWTQWAFIKMFNSYYCNDEKQARPIEELIEAFSTNGTQGMNVACGEEMDFTADEWNAKSEKEQQEILMNYRIAYLGNTMVNWCPALGTVLANDEVVDGVSERGGYPVIQKVMRQWCLRVSAYAQRLLDGLETVEWTDSLKETQRNWIGRSEGAEMNFKVKDSDIEFTIFTTRADTVFGVTFMVLAPESELVAKLTTPEQKAEVDAYLDRTKKRTERERIADRSVSGVFSGSYAINPLTNEPIPVWISDYVLAGYGTGAIMAVPAHDSRDYAFAKHFNLEIRPLIEGCDVSEESFDAKEGIMMNSPRPGAPEGGLVLNGLTVKEAIAKTKEYIKATGLGRVKVNFRLRDAIFSRQRYWGEPFPVYYKDGMPYMIDESCLPLELPEVAKFLPTETGEPPLGHATKWAWDTVNKCVTDNENIDNITIFPLELNTMPGFAGSSAYYLRYMDPRNHEALVSPAVDQYWKNVDLYVGGTEHATGHLIYSRFWNKFLHDWGISVAEEPFQKLVNQGMIQGRSNFVYRIKDTNTFVSLNLKDQYEVTPIHVDVNIVSNDILDLEAFKAWRPEYETAEFILEDGKYICGWAVEKMSKSMFNVVNPDMIVEKYGADTLRMYEMFLGPVEQSKPWDTNGIDGVHRFIKKFWSLFYDRNGEYLVKDEPATKEELKALHKLIKKVTGDIEQFSYNTSVSAFMICVNELSSLKCNKKEVLEQLIVVLAPFAPHVCEELWDTLGSTTSVCDAQWPAFNEQYLVEDTVNYTISFNGKARFNMEFPANAASDAIQATVLADERSLKWTEGKTPKKVIVVPKKIVNIVI</sequence>
<organism>
    <name type="scientific">Bacteroides fragilis (strain ATCC 25285 / DSM 2151 / CCUG 4856 / JCM 11019 / LMG 10263 / NCTC 9343 / Onslow / VPI 2553 / EN-2)</name>
    <dbReference type="NCBI Taxonomy" id="272559"/>
    <lineage>
        <taxon>Bacteria</taxon>
        <taxon>Pseudomonadati</taxon>
        <taxon>Bacteroidota</taxon>
        <taxon>Bacteroidia</taxon>
        <taxon>Bacteroidales</taxon>
        <taxon>Bacteroidaceae</taxon>
        <taxon>Bacteroides</taxon>
    </lineage>
</organism>
<reference key="1">
    <citation type="journal article" date="2005" name="Science">
        <title>Extensive DNA inversions in the B. fragilis genome control variable gene expression.</title>
        <authorList>
            <person name="Cerdeno-Tarraga A.-M."/>
            <person name="Patrick S."/>
            <person name="Crossman L.C."/>
            <person name="Blakely G."/>
            <person name="Abratt V."/>
            <person name="Lennard N."/>
            <person name="Poxton I."/>
            <person name="Duerden B."/>
            <person name="Harris B."/>
            <person name="Quail M.A."/>
            <person name="Barron A."/>
            <person name="Clark L."/>
            <person name="Corton C."/>
            <person name="Doggett J."/>
            <person name="Holden M.T.G."/>
            <person name="Larke N."/>
            <person name="Line A."/>
            <person name="Lord A."/>
            <person name="Norbertczak H."/>
            <person name="Ormond D."/>
            <person name="Price C."/>
            <person name="Rabbinowitsch E."/>
            <person name="Woodward J."/>
            <person name="Barrell B.G."/>
            <person name="Parkhill J."/>
        </authorList>
    </citation>
    <scope>NUCLEOTIDE SEQUENCE [LARGE SCALE GENOMIC DNA]</scope>
    <source>
        <strain>ATCC 25285 / DSM 2151 / CCUG 4856 / JCM 11019 / LMG 10263 / NCTC 9343 / Onslow / VPI 2553 / EN-2</strain>
    </source>
</reference>
<feature type="chain" id="PRO_1000009293" description="Leucine--tRNA ligase">
    <location>
        <begin position="1"/>
        <end position="943"/>
    </location>
</feature>
<feature type="short sequence motif" description="'HIGH' region">
    <location>
        <begin position="40"/>
        <end position="51"/>
    </location>
</feature>
<feature type="short sequence motif" description="'KMSKS' region">
    <location>
        <begin position="717"/>
        <end position="721"/>
    </location>
</feature>
<feature type="binding site" evidence="1">
    <location>
        <position position="720"/>
    </location>
    <ligand>
        <name>ATP</name>
        <dbReference type="ChEBI" id="CHEBI:30616"/>
    </ligand>
</feature>
<comment type="catalytic activity">
    <reaction evidence="1">
        <text>tRNA(Leu) + L-leucine + ATP = L-leucyl-tRNA(Leu) + AMP + diphosphate</text>
        <dbReference type="Rhea" id="RHEA:11688"/>
        <dbReference type="Rhea" id="RHEA-COMP:9613"/>
        <dbReference type="Rhea" id="RHEA-COMP:9622"/>
        <dbReference type="ChEBI" id="CHEBI:30616"/>
        <dbReference type="ChEBI" id="CHEBI:33019"/>
        <dbReference type="ChEBI" id="CHEBI:57427"/>
        <dbReference type="ChEBI" id="CHEBI:78442"/>
        <dbReference type="ChEBI" id="CHEBI:78494"/>
        <dbReference type="ChEBI" id="CHEBI:456215"/>
        <dbReference type="EC" id="6.1.1.4"/>
    </reaction>
</comment>
<comment type="subcellular location">
    <subcellularLocation>
        <location evidence="1">Cytoplasm</location>
    </subcellularLocation>
</comment>
<comment type="similarity">
    <text evidence="1">Belongs to the class-I aminoacyl-tRNA synthetase family.</text>
</comment>
<protein>
    <recommendedName>
        <fullName evidence="1">Leucine--tRNA ligase</fullName>
        <ecNumber evidence="1">6.1.1.4</ecNumber>
    </recommendedName>
    <alternativeName>
        <fullName evidence="1">Leucyl-tRNA synthetase</fullName>
        <shortName evidence="1">LeuRS</shortName>
    </alternativeName>
</protein>
<dbReference type="EC" id="6.1.1.4" evidence="1"/>
<dbReference type="EMBL" id="CR626927">
    <property type="protein sequence ID" value="CAH10038.1"/>
    <property type="molecule type" value="Genomic_DNA"/>
</dbReference>
<dbReference type="RefSeq" id="WP_010993827.1">
    <property type="nucleotide sequence ID" value="NC_003228.3"/>
</dbReference>
<dbReference type="SMR" id="Q5L7B4"/>
<dbReference type="PaxDb" id="272559-BF9343_4257"/>
<dbReference type="GeneID" id="60368555"/>
<dbReference type="KEGG" id="bfs:BF9343_4257"/>
<dbReference type="eggNOG" id="COG0495">
    <property type="taxonomic scope" value="Bacteria"/>
</dbReference>
<dbReference type="HOGENOM" id="CLU_004427_0_0_10"/>
<dbReference type="Proteomes" id="UP000006731">
    <property type="component" value="Chromosome"/>
</dbReference>
<dbReference type="GO" id="GO:0005829">
    <property type="term" value="C:cytosol"/>
    <property type="evidence" value="ECO:0007669"/>
    <property type="project" value="TreeGrafter"/>
</dbReference>
<dbReference type="GO" id="GO:0002161">
    <property type="term" value="F:aminoacyl-tRNA deacylase activity"/>
    <property type="evidence" value="ECO:0007669"/>
    <property type="project" value="InterPro"/>
</dbReference>
<dbReference type="GO" id="GO:0005524">
    <property type="term" value="F:ATP binding"/>
    <property type="evidence" value="ECO:0007669"/>
    <property type="project" value="UniProtKB-UniRule"/>
</dbReference>
<dbReference type="GO" id="GO:0004823">
    <property type="term" value="F:leucine-tRNA ligase activity"/>
    <property type="evidence" value="ECO:0007669"/>
    <property type="project" value="UniProtKB-UniRule"/>
</dbReference>
<dbReference type="GO" id="GO:0006429">
    <property type="term" value="P:leucyl-tRNA aminoacylation"/>
    <property type="evidence" value="ECO:0007669"/>
    <property type="project" value="UniProtKB-UniRule"/>
</dbReference>
<dbReference type="CDD" id="cd07958">
    <property type="entry name" value="Anticodon_Ia_Leu_BEm"/>
    <property type="match status" value="1"/>
</dbReference>
<dbReference type="FunFam" id="3.40.50.620:FF:000056">
    <property type="entry name" value="Leucine--tRNA ligase"/>
    <property type="match status" value="1"/>
</dbReference>
<dbReference type="FunFam" id="3.40.50.620:FF:000060">
    <property type="entry name" value="Leucine--tRNA ligase"/>
    <property type="match status" value="1"/>
</dbReference>
<dbReference type="FunFam" id="3.40.50.620:FF:000154">
    <property type="entry name" value="Leucine--tRNA ligase"/>
    <property type="match status" value="1"/>
</dbReference>
<dbReference type="FunFam" id="1.10.730.10:FF:000011">
    <property type="entry name" value="Leucine--tRNA ligase chloroplastic/mitochondrial"/>
    <property type="match status" value="1"/>
</dbReference>
<dbReference type="Gene3D" id="3.40.50.620">
    <property type="entry name" value="HUPs"/>
    <property type="match status" value="3"/>
</dbReference>
<dbReference type="Gene3D" id="1.10.730.10">
    <property type="entry name" value="Isoleucyl-tRNA Synthetase, Domain 1"/>
    <property type="match status" value="2"/>
</dbReference>
<dbReference type="HAMAP" id="MF_00049_B">
    <property type="entry name" value="Leu_tRNA_synth_B"/>
    <property type="match status" value="1"/>
</dbReference>
<dbReference type="InterPro" id="IPR001412">
    <property type="entry name" value="aa-tRNA-synth_I_CS"/>
</dbReference>
<dbReference type="InterPro" id="IPR002302">
    <property type="entry name" value="Leu-tRNA-ligase"/>
</dbReference>
<dbReference type="InterPro" id="IPR025709">
    <property type="entry name" value="Leu_tRNA-synth_edit"/>
</dbReference>
<dbReference type="InterPro" id="IPR013155">
    <property type="entry name" value="M/V/L/I-tRNA-synth_anticd-bd"/>
</dbReference>
<dbReference type="InterPro" id="IPR015413">
    <property type="entry name" value="Methionyl/Leucyl_tRNA_Synth"/>
</dbReference>
<dbReference type="InterPro" id="IPR014729">
    <property type="entry name" value="Rossmann-like_a/b/a_fold"/>
</dbReference>
<dbReference type="InterPro" id="IPR009080">
    <property type="entry name" value="tRNAsynth_Ia_anticodon-bd"/>
</dbReference>
<dbReference type="InterPro" id="IPR009008">
    <property type="entry name" value="Val/Leu/Ile-tRNA-synth_edit"/>
</dbReference>
<dbReference type="NCBIfam" id="TIGR00396">
    <property type="entry name" value="leuS_bact"/>
    <property type="match status" value="1"/>
</dbReference>
<dbReference type="PANTHER" id="PTHR43740:SF2">
    <property type="entry name" value="LEUCINE--TRNA LIGASE, MITOCHONDRIAL"/>
    <property type="match status" value="1"/>
</dbReference>
<dbReference type="PANTHER" id="PTHR43740">
    <property type="entry name" value="LEUCYL-TRNA SYNTHETASE"/>
    <property type="match status" value="1"/>
</dbReference>
<dbReference type="Pfam" id="PF08264">
    <property type="entry name" value="Anticodon_1"/>
    <property type="match status" value="1"/>
</dbReference>
<dbReference type="Pfam" id="PF13603">
    <property type="entry name" value="tRNA-synt_1_2"/>
    <property type="match status" value="1"/>
</dbReference>
<dbReference type="Pfam" id="PF09334">
    <property type="entry name" value="tRNA-synt_1g"/>
    <property type="match status" value="1"/>
</dbReference>
<dbReference type="PRINTS" id="PR00985">
    <property type="entry name" value="TRNASYNTHLEU"/>
</dbReference>
<dbReference type="SUPFAM" id="SSF47323">
    <property type="entry name" value="Anticodon-binding domain of a subclass of class I aminoacyl-tRNA synthetases"/>
    <property type="match status" value="1"/>
</dbReference>
<dbReference type="SUPFAM" id="SSF52374">
    <property type="entry name" value="Nucleotidylyl transferase"/>
    <property type="match status" value="1"/>
</dbReference>
<dbReference type="SUPFAM" id="SSF50677">
    <property type="entry name" value="ValRS/IleRS/LeuRS editing domain"/>
    <property type="match status" value="1"/>
</dbReference>
<dbReference type="PROSITE" id="PS00178">
    <property type="entry name" value="AA_TRNA_LIGASE_I"/>
    <property type="match status" value="1"/>
</dbReference>